<comment type="function">
    <text>Actin- and myosin-binding protein implicated in the regulation of actomyosin interactions in smooth muscle and nonmuscle cells (could act as a bridge between myosin and actin filaments). Stimulates actin binding of tropomyosin which increases the stabilization of actin filament structure. In muscle tissues, inhibits the actomyosin ATPase by binding to F-actin. This inhibition is attenuated by calcium-calmodulin and is potentiated by tropomyosin. Interacts with actin, myosin, two molecules of tropomyosin and with calmodulin. Also plays an essential role during cellular mitosis and receptor capping.</text>
</comment>
<comment type="subcellular location">
    <subcellularLocation>
        <location evidence="2">Cytoplasm</location>
        <location evidence="2">Cytoskeleton</location>
    </subcellularLocation>
    <subcellularLocation>
        <location evidence="2">Cytoplasm</location>
        <location evidence="2">Myofibril</location>
    </subcellularLocation>
    <subcellularLocation>
        <location evidence="2">Cytoplasm</location>
        <location evidence="2">Cytoskeleton</location>
        <location evidence="2">Stress fiber</location>
    </subcellularLocation>
    <text evidence="2">On thin filaments in smooth muscle and on stress fibers in fibroblasts (nonmuscle).</text>
</comment>
<comment type="alternative products">
    <event type="alternative splicing"/>
    <isoform>
        <id>P12957-1</id>
        <name>Gizzard h-cad</name>
        <sequence type="displayed"/>
    </isoform>
    <isoform>
        <id>P12957-2</id>
        <name>Brain l-cad</name>
        <sequence type="described" ref="VSP_004152 VSP_004153"/>
    </isoform>
    <isoform>
        <id>P12957-3</id>
        <name>Gizzard l-cad</name>
        <sequence type="described" ref="VSP_004153"/>
    </isoform>
</comment>
<comment type="tissue specificity">
    <text>High-molecular-weight caldesmon (h-caldesmon) is predominantly expressed in smooth muscles, whereas low-molecular-weight caldesmon (l-caldesmon) is widely distributed in non-muscle tissues and cells. Not expressed in skeletal muscle or heart.</text>
</comment>
<comment type="domain">
    <text>The N-terminal part seems to be a myosin/calmodulin-binding domain, and the C-terminal a tropomyosin/actin/calmodulin-binding domain. These two domains are separated by a central helical region in the muscle forms.</text>
</comment>
<comment type="PTM">
    <text evidence="1">Phosphorylated in non-muscle cells. Phosphorylation by CDK1 during mitosis causes caldesmon to dissociate from microfilaments. Phosphorylation reduces caldesmon binding to actin, myosin, and calmodulin as well as its inhibition of actomyosin ATPase activity. Phosphorylation also occurs in both quiescent and dividing smooth muscle cells with similar effects on the interaction with actin and calmodulin and on microfilaments reorganization (By similarity).</text>
</comment>
<comment type="similarity">
    <text evidence="7">Belongs to the caldesmon family.</text>
</comment>
<name>CALD1_CHICK</name>
<dbReference type="EMBL" id="J04968">
    <property type="protein sequence ID" value="AAA49067.1"/>
    <property type="molecule type" value="mRNA"/>
</dbReference>
<dbReference type="EMBL" id="D17648">
    <property type="protein sequence ID" value="BAA04539.1"/>
    <property type="molecule type" value="Genomic_DNA"/>
</dbReference>
<dbReference type="EMBL" id="M28417">
    <property type="protein sequence ID" value="AAA48810.1"/>
    <property type="molecule type" value="mRNA"/>
</dbReference>
<dbReference type="EMBL" id="M60620">
    <property type="protein sequence ID" value="AAA48936.1"/>
    <property type="molecule type" value="mRNA"/>
</dbReference>
<dbReference type="EMBL" id="D17648">
    <property type="protein sequence ID" value="BAA04538.1"/>
    <property type="molecule type" value="Genomic_DNA"/>
</dbReference>
<dbReference type="EMBL" id="D17648">
    <property type="protein sequence ID" value="BAA04540.1"/>
    <property type="molecule type" value="Genomic_DNA"/>
</dbReference>
<dbReference type="EMBL" id="M59762">
    <property type="protein sequence ID" value="AAA48649.1"/>
    <property type="molecule type" value="mRNA"/>
</dbReference>
<dbReference type="EMBL" id="D17552">
    <property type="protein sequence ID" value="BAA04490.1"/>
    <property type="molecule type" value="Genomic_DNA"/>
</dbReference>
<dbReference type="EMBL" id="M26684">
    <property type="protein sequence ID" value="AAA48811.1"/>
    <property type="molecule type" value="mRNA"/>
</dbReference>
<dbReference type="PIR" id="A33430">
    <property type="entry name" value="A33430"/>
</dbReference>
<dbReference type="PIR" id="A39038">
    <property type="entry name" value="A39038"/>
</dbReference>
<dbReference type="RefSeq" id="NP_989489.1">
    <property type="nucleotide sequence ID" value="NM_204158.1"/>
</dbReference>
<dbReference type="RefSeq" id="XP_046762264.1">
    <molecule id="P12957-1"/>
    <property type="nucleotide sequence ID" value="XM_046906308.1"/>
</dbReference>
<dbReference type="RefSeq" id="XP_046762265.1">
    <molecule id="P12957-1"/>
    <property type="nucleotide sequence ID" value="XM_046906309.1"/>
</dbReference>
<dbReference type="RefSeq" id="XP_046762266.1">
    <molecule id="P12957-1"/>
    <property type="nucleotide sequence ID" value="XM_046906310.1"/>
</dbReference>
<dbReference type="RefSeq" id="XP_046762272.1">
    <molecule id="P12957-3"/>
    <property type="nucleotide sequence ID" value="XM_046906316.1"/>
</dbReference>
<dbReference type="RefSeq" id="XP_046762273.1">
    <molecule id="P12957-3"/>
    <property type="nucleotide sequence ID" value="XM_046906317.1"/>
</dbReference>
<dbReference type="RefSeq" id="XP_046762274.1">
    <molecule id="P12957-3"/>
    <property type="nucleotide sequence ID" value="XM_046906318.1"/>
</dbReference>
<dbReference type="RefSeq" id="XP_046762276.1">
    <molecule id="P12957-2"/>
    <property type="nucleotide sequence ID" value="XM_046906320.1"/>
</dbReference>
<dbReference type="BMRB" id="P12957"/>
<dbReference type="SMR" id="P12957"/>
<dbReference type="FunCoup" id="P12957">
    <property type="interactions" value="1666"/>
</dbReference>
<dbReference type="iPTMnet" id="P12957"/>
<dbReference type="PaxDb" id="9031-ENSGALP00000021314"/>
<dbReference type="GeneID" id="373965"/>
<dbReference type="KEGG" id="gga:373965"/>
<dbReference type="CTD" id="800"/>
<dbReference type="VEuPathDB" id="HostDB:geneid_373965"/>
<dbReference type="eggNOG" id="ENOG502QSYB">
    <property type="taxonomic scope" value="Eukaryota"/>
</dbReference>
<dbReference type="InParanoid" id="P12957"/>
<dbReference type="OrthoDB" id="9908857at2759"/>
<dbReference type="PhylomeDB" id="P12957"/>
<dbReference type="SABIO-RK" id="P12957"/>
<dbReference type="PRO" id="PR:P12957"/>
<dbReference type="Proteomes" id="UP000000539">
    <property type="component" value="Unassembled WGS sequence"/>
</dbReference>
<dbReference type="GO" id="GO:0015629">
    <property type="term" value="C:actin cytoskeleton"/>
    <property type="evidence" value="ECO:0000318"/>
    <property type="project" value="GO_Central"/>
</dbReference>
<dbReference type="GO" id="GO:0030016">
    <property type="term" value="C:myofibril"/>
    <property type="evidence" value="ECO:0007669"/>
    <property type="project" value="UniProtKB-SubCell"/>
</dbReference>
<dbReference type="GO" id="GO:0001725">
    <property type="term" value="C:stress fiber"/>
    <property type="evidence" value="ECO:0007669"/>
    <property type="project" value="UniProtKB-SubCell"/>
</dbReference>
<dbReference type="GO" id="GO:0003779">
    <property type="term" value="F:actin binding"/>
    <property type="evidence" value="ECO:0000314"/>
    <property type="project" value="AgBase"/>
</dbReference>
<dbReference type="GO" id="GO:0005516">
    <property type="term" value="F:calmodulin binding"/>
    <property type="evidence" value="ECO:0000353"/>
    <property type="project" value="CAFA"/>
</dbReference>
<dbReference type="GO" id="GO:0045159">
    <property type="term" value="F:myosin II binding"/>
    <property type="evidence" value="ECO:0000314"/>
    <property type="project" value="AgBase"/>
</dbReference>
<dbReference type="GO" id="GO:0044548">
    <property type="term" value="F:S100 protein binding"/>
    <property type="evidence" value="ECO:0000353"/>
    <property type="project" value="AgBase"/>
</dbReference>
<dbReference type="GO" id="GO:0051017">
    <property type="term" value="P:actin filament bundle assembly"/>
    <property type="evidence" value="ECO:0000318"/>
    <property type="project" value="GO_Central"/>
</dbReference>
<dbReference type="GO" id="GO:0006936">
    <property type="term" value="P:muscle contraction"/>
    <property type="evidence" value="ECO:0007669"/>
    <property type="project" value="InterPro"/>
</dbReference>
<dbReference type="GO" id="GO:1903611">
    <property type="term" value="P:negative regulation of calcium-dependent ATPase activity"/>
    <property type="evidence" value="ECO:0000315"/>
    <property type="project" value="AgBase"/>
</dbReference>
<dbReference type="DisProt" id="DP00120"/>
<dbReference type="InterPro" id="IPR006017">
    <property type="entry name" value="Caldesmon"/>
</dbReference>
<dbReference type="InterPro" id="IPR006018">
    <property type="entry name" value="Caldesmon_LSP"/>
</dbReference>
<dbReference type="PANTHER" id="PTHR18949">
    <property type="entry name" value="CALDESMON"/>
    <property type="match status" value="1"/>
</dbReference>
<dbReference type="PANTHER" id="PTHR18949:SF0">
    <property type="entry name" value="CALDESMON"/>
    <property type="match status" value="1"/>
</dbReference>
<dbReference type="Pfam" id="PF02029">
    <property type="entry name" value="Caldesmon"/>
    <property type="match status" value="2"/>
</dbReference>
<dbReference type="PRINTS" id="PR01076">
    <property type="entry name" value="CALDESMON"/>
</dbReference>
<reference key="1">
    <citation type="journal article" date="1989" name="J. Biol. Chem.">
        <title>Cloning and expression of a smooth muscle caldesmon.</title>
        <authorList>
            <person name="Bryan J."/>
            <person name="Imai M."/>
            <person name="Lee R."/>
            <person name="Moore P."/>
            <person name="Cook R.G."/>
            <person name="Lin W.-G."/>
        </authorList>
    </citation>
    <scope>NUCLEOTIDE SEQUENCE [MRNA]</scope>
    <scope>PARTIAL PROTEIN SEQUENCE (ISOFORM GIZZARD H-CAD)</scope>
    <source>
        <tissue>Gizzard</tissue>
        <tissue>Oviduct</tissue>
    </source>
</reference>
<reference key="2">
    <citation type="journal article" date="1989" name="Biochem. Biophys. Res. Commun.">
        <title>Primary structure and functional expression of h-caldesmon complementary DNA.</title>
        <authorList>
            <person name="Hayashi K."/>
            <person name="Kanda K."/>
            <person name="Kimizuka F."/>
            <person name="Kato I."/>
            <person name="Sobue K."/>
        </authorList>
    </citation>
    <scope>NUCLEOTIDE SEQUENCE [MRNA]</scope>
    <scope>PARTIAL PROTEIN SEQUENCE (ISOFORM GIZZARD H-CAD)</scope>
    <source>
        <tissue>Gizzard</tissue>
    </source>
</reference>
<reference key="3">
    <citation type="journal article" date="1991" name="J. Biol. Chem.">
        <title>Structural and functional relationships between h- and l-caldesmons.</title>
        <authorList>
            <person name="Hayashi K."/>
            <person name="Fujio Y."/>
            <person name="Kato I."/>
            <person name="Sobue K."/>
        </authorList>
    </citation>
    <scope>NUCLEOTIDE SEQUENCE [MRNA]</scope>
    <scope>PARTIAL PROTEIN SEQUENCE (ISOFORM BRAIN L-CAD)</scope>
    <source>
        <tissue>Brain</tissue>
    </source>
</reference>
<reference key="4">
    <citation type="journal article" date="1993" name="Biochem. Biophys. Res. Commun.">
        <title>Common structural and expressional properties of vertebrate caldesmon genes.</title>
        <authorList>
            <person name="Haruna M."/>
            <person name="Hayashi K."/>
            <person name="Yano H."/>
            <person name="Takeuchi O."/>
            <person name="Sobue K."/>
        </authorList>
    </citation>
    <scope>NUCLEOTIDE SEQUENCE [GENOMIC DNA] (GIZZARD H-CAD; BRAIN L-CAD AND GIZZARD L-CAD)</scope>
</reference>
<reference key="5">
    <citation type="journal article" date="1991" name="J. Muscle Res. Cell Motil.">
        <title>Sequence of an avian non-muscle caldesmon.</title>
        <authorList>
            <person name="Bryan J."/>
            <person name="Lee R."/>
        </authorList>
    </citation>
    <scope>NUCLEOTIDE SEQUENCE [MRNA] (ISOFORM GIZZARD L-CAD)</scope>
    <source>
        <tissue>Gizzard</tissue>
    </source>
</reference>
<reference key="6">
    <citation type="journal article" date="1994" name="Biochem. Biophys. Res. Commun.">
        <title>Identification of two distinct promoters in the chicken caldesmon gene.</title>
        <authorList>
            <person name="Yano H."/>
            <person name="Hayashi K."/>
            <person name="Haruna M."/>
            <person name="Sobue K."/>
        </authorList>
    </citation>
    <scope>NUCLEOTIDE SEQUENCE [GENOMIC DNA] OF 1-15 (ISOFORM BRAIN L-CAD)</scope>
    <source>
        <tissue>Brain</tissue>
    </source>
</reference>
<reference key="7">
    <citation type="journal article" date="1989" name="Biochem. Biophys. Res. Commun.">
        <title>35 kDa fragment of h-caldesmon conserves two consensus sequences of the tropomyosin-binding domain in troponin T.</title>
        <authorList>
            <person name="Hayashi K."/>
            <person name="Yamada S."/>
            <person name="Kanda K."/>
            <person name="Kimizuka F."/>
            <person name="Kato I."/>
            <person name="Sobue K."/>
        </authorList>
    </citation>
    <scope>NUCLEOTIDE SEQUENCE [MRNA] OF 451-756</scope>
    <scope>PARTIAL PROTEIN SEQUENCE</scope>
    <source>
        <tissue>Gizzard</tissue>
    </source>
</reference>
<reference key="8">
    <citation type="journal article" date="1988" name="Biochem. Biophys. Res. Commun.">
        <title>Identification of a 15 kilodalton actin binding region on gizzard caldesmon probed by chemical cross-linking.</title>
        <authorList>
            <person name="Mornet D."/>
            <person name="Audemard E."/>
            <person name="Derancourt J."/>
        </authorList>
    </citation>
    <scope>PROTEIN SEQUENCE OF 498-525</scope>
</reference>
<reference key="9">
    <citation type="journal article" date="1991" name="J. Biol. Chem.">
        <title>Phosphorylation of caldesmon by p34cdc2 kinase. Identification of phosphorylation sites.</title>
        <authorList>
            <person name="Mak A.S."/>
            <person name="Carpenter M."/>
            <person name="Smillie L.B."/>
            <person name="Wang J.H."/>
        </authorList>
    </citation>
    <scope>PHOSPHORYLATION AT SER-597; SER-682; THR-688; THR-711 AND SER-717</scope>
</reference>
<reference key="10">
    <citation type="journal article" date="1999" name="J. Biol. Chem.">
        <title>Tyrosine phosphorylation of caldesmon is required for binding to the Shc.Grb2 complex.</title>
        <authorList>
            <person name="Wang Z."/>
            <person name="Danielsen A.J."/>
            <person name="Maihle N.J."/>
            <person name="McManus M.J."/>
        </authorList>
    </citation>
    <scope>PHOSPHORYLATION AT TYR-27 AND TYR-640</scope>
</reference>
<keyword id="KW-0009">Actin-binding</keyword>
<keyword id="KW-0025">Alternative splicing</keyword>
<keyword id="KW-0112">Calmodulin-binding</keyword>
<keyword id="KW-0963">Cytoplasm</keyword>
<keyword id="KW-0206">Cytoskeleton</keyword>
<keyword id="KW-0903">Direct protein sequencing</keyword>
<keyword id="KW-0514">Muscle protein</keyword>
<keyword id="KW-0597">Phosphoprotein</keyword>
<keyword id="KW-1185">Reference proteome</keyword>
<keyword id="KW-0677">Repeat</keyword>
<sequence length="771" mass="88747">MDDFERRRELRRQKREEMRLEAERLSYQRNDDDEEEAARERRRRARQERLRQKEEGDVSGEVTEKSEVNAQNSVAEEETKRSTDDEAALLERLARREERRQKRLQEALERQKEFDPTITDGSLSVPSRREVNNVEENEITGKEEKVETRQGRCEIEETETVTKSYQRNNWRQDGEEEGKKEEKDSEEEKPKEVPTEENQVDVAVEKSTDKEEVVETKTLAVNAENDTNAMLEGEQSITDAADKEKEEAEKEREKLEAEEKERLKAEEEKKAAEEKQKAEEEKKAAEERERAKAEEEKRAAEERERAKAEEERKAAEERERAKAEEERKAAEERAKAEEERKAAEERAKAEEERKAAEERAKAEKERKAAEERERAKAEEEKRAAEEKARLEAEKLKEKKKMEEKKAQEEKAQANLLRKQEEDKEAKVEAKKESLPEKLQPTSKKDQVKDNKDKEKAPKEEMKSVWDRKRGVPEQKAQNGERELTTPKLKSTENAFGRSNLKGAANAEAGSEKLKEKQQEAAVELDELKKRREERRKILEEEEQKKKQEEAERKIREEEEKKRMKEEIERRRAEAAEKRQKVPEDGVSEEKKPFKCFSPKGSSLKIEERAEFLNKSAQKSGMKPAHTTAVVSKIDSRLEQYTSAVVGNKAAKPAKPAASDLPVPAEGVRNIKSMWEKGNVFSSPGGTGTPNKETAGLKVGVSSRINEWLTKTPEGNKSPAPKPSDLRPGDVSGKRNLWEKQSVEKPAASSSKVTATGKKSETNGLRQFEKEP</sequence>
<feature type="chain" id="PRO_0000089287" description="Caldesmon">
    <location>
        <begin position="1"/>
        <end position="771"/>
    </location>
</feature>
<feature type="repeat" description="1">
    <location>
        <begin position="251"/>
        <end position="265"/>
    </location>
</feature>
<feature type="repeat" description="2">
    <location>
        <begin position="266"/>
        <end position="278"/>
    </location>
</feature>
<feature type="repeat" description="3">
    <location>
        <begin position="279"/>
        <end position="291"/>
    </location>
</feature>
<feature type="repeat" description="4">
    <location>
        <begin position="294"/>
        <end position="306"/>
    </location>
</feature>
<feature type="repeat" description="5">
    <location>
        <begin position="309"/>
        <end position="321"/>
    </location>
</feature>
<feature type="repeat" description="6">
    <location>
        <begin position="324"/>
        <end position="336"/>
    </location>
</feature>
<feature type="repeat" description="7">
    <location>
        <begin position="337"/>
        <end position="349"/>
    </location>
</feature>
<feature type="repeat" description="8">
    <location>
        <begin position="350"/>
        <end position="362"/>
    </location>
</feature>
<feature type="repeat" description="9">
    <location>
        <begin position="363"/>
        <end position="375"/>
    </location>
</feature>
<feature type="repeat" description="10">
    <location>
        <begin position="378"/>
        <end position="390"/>
    </location>
</feature>
<feature type="region of interest" description="Disordered" evidence="4">
    <location>
        <begin position="23"/>
        <end position="91"/>
    </location>
</feature>
<feature type="region of interest" description="Myosin and calmodulin-binding">
    <location>
        <begin position="26"/>
        <end position="199"/>
    </location>
</feature>
<feature type="region of interest" description="Disordered" evidence="4">
    <location>
        <begin position="104"/>
        <end position="599"/>
    </location>
</feature>
<feature type="region of interest" description="10 X 13 AA approximate tandem repeats">
    <location>
        <begin position="251"/>
        <end position="390"/>
    </location>
</feature>
<feature type="region of interest" description="Tropomyosin-binding" evidence="3">
    <location>
        <begin position="523"/>
        <end position="580"/>
    </location>
</feature>
<feature type="region of interest" description="Strong actin-binding">
    <location>
        <begin position="612"/>
        <end position="644"/>
    </location>
</feature>
<feature type="region of interest" description="Tropomyosin-binding" evidence="3">
    <location>
        <begin position="622"/>
        <end position="632"/>
    </location>
</feature>
<feature type="region of interest" description="Calmodulin-binding">
    <location>
        <begin position="674"/>
        <end position="680"/>
    </location>
</feature>
<feature type="region of interest" description="Disordered" evidence="4">
    <location>
        <begin position="676"/>
        <end position="771"/>
    </location>
</feature>
<feature type="region of interest" description="Weak actin-binding">
    <location>
        <begin position="726"/>
        <end position="752"/>
    </location>
</feature>
<feature type="compositionally biased region" description="Basic and acidic residues" evidence="4">
    <location>
        <begin position="47"/>
        <end position="67"/>
    </location>
</feature>
<feature type="compositionally biased region" description="Basic and acidic residues" evidence="4">
    <location>
        <begin position="104"/>
        <end position="115"/>
    </location>
</feature>
<feature type="compositionally biased region" description="Basic and acidic residues" evidence="4">
    <location>
        <begin position="139"/>
        <end position="155"/>
    </location>
</feature>
<feature type="compositionally biased region" description="Basic and acidic residues" evidence="4">
    <location>
        <begin position="170"/>
        <end position="194"/>
    </location>
</feature>
<feature type="compositionally biased region" description="Basic and acidic residues" evidence="4">
    <location>
        <begin position="203"/>
        <end position="215"/>
    </location>
</feature>
<feature type="compositionally biased region" description="Basic and acidic residues" evidence="4">
    <location>
        <begin position="240"/>
        <end position="435"/>
    </location>
</feature>
<feature type="compositionally biased region" description="Basic and acidic residues" evidence="4">
    <location>
        <begin position="442"/>
        <end position="484"/>
    </location>
</feature>
<feature type="compositionally biased region" description="Basic and acidic residues" evidence="4">
    <location>
        <begin position="509"/>
        <end position="518"/>
    </location>
</feature>
<feature type="compositionally biased region" description="Basic and acidic residues" evidence="4">
    <location>
        <begin position="525"/>
        <end position="592"/>
    </location>
</feature>
<feature type="compositionally biased region" description="Polar residues" evidence="4">
    <location>
        <begin position="679"/>
        <end position="691"/>
    </location>
</feature>
<feature type="compositionally biased region" description="Basic and acidic residues" evidence="4">
    <location>
        <begin position="723"/>
        <end position="742"/>
    </location>
</feature>
<feature type="modified residue" description="Phosphotyrosine" evidence="5">
    <location>
        <position position="27"/>
    </location>
</feature>
<feature type="modified residue" description="Phosphoserine; by CDK1" evidence="8">
    <location>
        <position position="597"/>
    </location>
</feature>
<feature type="modified residue" description="Phosphotyrosine" evidence="5">
    <location>
        <position position="640"/>
    </location>
</feature>
<feature type="modified residue" description="Phosphoserine; by CDK1" evidence="8">
    <location>
        <position position="682"/>
    </location>
</feature>
<feature type="modified residue" description="Phosphothreonine; by CDK1" evidence="8">
    <location>
        <position position="688"/>
    </location>
</feature>
<feature type="modified residue" description="Phosphothreonine; by CDK1" evidence="8">
    <location>
        <position position="711"/>
    </location>
</feature>
<feature type="modified residue" description="Phosphoserine; by CDK1" evidence="8">
    <location>
        <position position="717"/>
    </location>
</feature>
<feature type="splice variant" id="VSP_004152" description="In isoform Brain l-cad." evidence="7">
    <original>MDDFERRRELRRQKREEMRLEAER</original>
    <variation>MISRSYCRQNLSSLSK</variation>
    <location>
        <begin position="1"/>
        <end position="24"/>
    </location>
</feature>
<feature type="splice variant" id="VSP_004153" description="In isoform Brain l-cad and isoform Gizzard l-cad." evidence="6">
    <location>
        <begin position="200"/>
        <end position="446"/>
    </location>
</feature>
<feature type="sequence conflict" description="In Ref. 1; AA sequence." evidence="7" ref="1">
    <location>
        <begin position="318"/>
        <end position="332"/>
    </location>
</feature>
<feature type="sequence conflict" description="In Ref. 3; AAA48936." evidence="7" ref="3">
    <original>D</original>
    <variation>V</variation>
    <location>
        <position position="452"/>
    </location>
</feature>
<feature type="sequence conflict" description="In Ref. 3 and 4." evidence="7" ref="3 4">
    <original>N</original>
    <variation>NA</variation>
    <location>
        <position position="762"/>
    </location>
</feature>
<evidence type="ECO:0000250" key="1"/>
<evidence type="ECO:0000250" key="2">
    <source>
        <dbReference type="UniProtKB" id="P13505"/>
    </source>
</evidence>
<evidence type="ECO:0000255" key="3"/>
<evidence type="ECO:0000256" key="4">
    <source>
        <dbReference type="SAM" id="MobiDB-lite"/>
    </source>
</evidence>
<evidence type="ECO:0000269" key="5">
    <source>
    </source>
</evidence>
<evidence type="ECO:0000303" key="6">
    <source>
    </source>
</evidence>
<evidence type="ECO:0000305" key="7"/>
<evidence type="ECO:0000305" key="8">
    <source>
    </source>
</evidence>
<proteinExistence type="evidence at protein level"/>
<organism>
    <name type="scientific">Gallus gallus</name>
    <name type="common">Chicken</name>
    <dbReference type="NCBI Taxonomy" id="9031"/>
    <lineage>
        <taxon>Eukaryota</taxon>
        <taxon>Metazoa</taxon>
        <taxon>Chordata</taxon>
        <taxon>Craniata</taxon>
        <taxon>Vertebrata</taxon>
        <taxon>Euteleostomi</taxon>
        <taxon>Archelosauria</taxon>
        <taxon>Archosauria</taxon>
        <taxon>Dinosauria</taxon>
        <taxon>Saurischia</taxon>
        <taxon>Theropoda</taxon>
        <taxon>Coelurosauria</taxon>
        <taxon>Aves</taxon>
        <taxon>Neognathae</taxon>
        <taxon>Galloanserae</taxon>
        <taxon>Galliformes</taxon>
        <taxon>Phasianidae</taxon>
        <taxon>Phasianinae</taxon>
        <taxon>Gallus</taxon>
    </lineage>
</organism>
<accession>P12957</accession>
<accession>Q03698</accession>
<accession>Q90756</accession>
<accession>Q90761</accession>
<accession>Q92018</accession>
<accession>Q99230</accession>
<gene>
    <name type="primary">CALD1</name>
    <name type="synonym">CAD</name>
</gene>
<protein>
    <recommendedName>
        <fullName>Caldesmon</fullName>
        <shortName>CDM</shortName>
    </recommendedName>
</protein>